<feature type="chain" id="PRO_0000260243" description="Soluble pyridine nucleotide transhydrogenase">
    <location>
        <begin position="1"/>
        <end position="466"/>
    </location>
</feature>
<feature type="binding site" evidence="1">
    <location>
        <begin position="36"/>
        <end position="45"/>
    </location>
    <ligand>
        <name>FAD</name>
        <dbReference type="ChEBI" id="CHEBI:57692"/>
    </ligand>
</feature>
<protein>
    <recommendedName>
        <fullName evidence="1">Soluble pyridine nucleotide transhydrogenase</fullName>
        <shortName evidence="1">STH</shortName>
        <ecNumber evidence="1">1.6.1.1</ecNumber>
    </recommendedName>
    <alternativeName>
        <fullName evidence="1">NAD(P)(+) transhydrogenase [B-specific]</fullName>
    </alternativeName>
</protein>
<reference key="1">
    <citation type="journal article" date="2004" name="Nat. Genet.">
        <title>Comparison of genome degradation in Paratyphi A and Typhi, human-restricted serovars of Salmonella enterica that cause typhoid.</title>
        <authorList>
            <person name="McClelland M."/>
            <person name="Sanderson K.E."/>
            <person name="Clifton S.W."/>
            <person name="Latreille P."/>
            <person name="Porwollik S."/>
            <person name="Sabo A."/>
            <person name="Meyer R."/>
            <person name="Bieri T."/>
            <person name="Ozersky P."/>
            <person name="McLellan M."/>
            <person name="Harkins C.R."/>
            <person name="Wang C."/>
            <person name="Nguyen C."/>
            <person name="Berghoff A."/>
            <person name="Elliott G."/>
            <person name="Kohlberg S."/>
            <person name="Strong C."/>
            <person name="Du F."/>
            <person name="Carter J."/>
            <person name="Kremizki C."/>
            <person name="Layman D."/>
            <person name="Leonard S."/>
            <person name="Sun H."/>
            <person name="Fulton L."/>
            <person name="Nash W."/>
            <person name="Miner T."/>
            <person name="Minx P."/>
            <person name="Delehaunty K."/>
            <person name="Fronick C."/>
            <person name="Magrini V."/>
            <person name="Nhan M."/>
            <person name="Warren W."/>
            <person name="Florea L."/>
            <person name="Spieth J."/>
            <person name="Wilson R.K."/>
        </authorList>
    </citation>
    <scope>NUCLEOTIDE SEQUENCE [LARGE SCALE GENOMIC DNA]</scope>
    <source>
        <strain>ATCC 9150 / SARB42</strain>
    </source>
</reference>
<name>STHA_SALPA</name>
<proteinExistence type="inferred from homology"/>
<organism>
    <name type="scientific">Salmonella paratyphi A (strain ATCC 9150 / SARB42)</name>
    <dbReference type="NCBI Taxonomy" id="295319"/>
    <lineage>
        <taxon>Bacteria</taxon>
        <taxon>Pseudomonadati</taxon>
        <taxon>Pseudomonadota</taxon>
        <taxon>Gammaproteobacteria</taxon>
        <taxon>Enterobacterales</taxon>
        <taxon>Enterobacteriaceae</taxon>
        <taxon>Salmonella</taxon>
    </lineage>
</organism>
<dbReference type="EC" id="1.6.1.1" evidence="1"/>
<dbReference type="EMBL" id="CP000026">
    <property type="protein sequence ID" value="AAV79726.1"/>
    <property type="molecule type" value="Genomic_DNA"/>
</dbReference>
<dbReference type="RefSeq" id="WP_001120789.1">
    <property type="nucleotide sequence ID" value="NC_006511.1"/>
</dbReference>
<dbReference type="SMR" id="Q5PK71"/>
<dbReference type="GeneID" id="66758375"/>
<dbReference type="KEGG" id="spt:SPA3964"/>
<dbReference type="HOGENOM" id="CLU_016755_0_0_6"/>
<dbReference type="Proteomes" id="UP000008185">
    <property type="component" value="Chromosome"/>
</dbReference>
<dbReference type="GO" id="GO:0005829">
    <property type="term" value="C:cytosol"/>
    <property type="evidence" value="ECO:0007669"/>
    <property type="project" value="TreeGrafter"/>
</dbReference>
<dbReference type="GO" id="GO:0004148">
    <property type="term" value="F:dihydrolipoyl dehydrogenase (NADH) activity"/>
    <property type="evidence" value="ECO:0007669"/>
    <property type="project" value="TreeGrafter"/>
</dbReference>
<dbReference type="GO" id="GO:0050660">
    <property type="term" value="F:flavin adenine dinucleotide binding"/>
    <property type="evidence" value="ECO:0007669"/>
    <property type="project" value="TreeGrafter"/>
</dbReference>
<dbReference type="GO" id="GO:0003957">
    <property type="term" value="F:NAD(P)+ transhydrogenase (Si-specific) activity"/>
    <property type="evidence" value="ECO:0007669"/>
    <property type="project" value="UniProtKB-UniRule"/>
</dbReference>
<dbReference type="GO" id="GO:0006103">
    <property type="term" value="P:2-oxoglutarate metabolic process"/>
    <property type="evidence" value="ECO:0007669"/>
    <property type="project" value="TreeGrafter"/>
</dbReference>
<dbReference type="GO" id="GO:0006739">
    <property type="term" value="P:NADP metabolic process"/>
    <property type="evidence" value="ECO:0007669"/>
    <property type="project" value="UniProtKB-UniRule"/>
</dbReference>
<dbReference type="FunFam" id="3.30.390.30:FF:000002">
    <property type="entry name" value="Soluble pyridine nucleotide transhydrogenase"/>
    <property type="match status" value="1"/>
</dbReference>
<dbReference type="FunFam" id="3.50.50.60:FF:000008">
    <property type="entry name" value="Soluble pyridine nucleotide transhydrogenase"/>
    <property type="match status" value="1"/>
</dbReference>
<dbReference type="Gene3D" id="3.30.390.30">
    <property type="match status" value="1"/>
</dbReference>
<dbReference type="Gene3D" id="3.50.50.60">
    <property type="entry name" value="FAD/NAD(P)-binding domain"/>
    <property type="match status" value="2"/>
</dbReference>
<dbReference type="HAMAP" id="MF_00247">
    <property type="entry name" value="SthA"/>
    <property type="match status" value="1"/>
</dbReference>
<dbReference type="InterPro" id="IPR050151">
    <property type="entry name" value="Class-I_Pyr_Nuc-Dis_Oxidored"/>
</dbReference>
<dbReference type="InterPro" id="IPR036188">
    <property type="entry name" value="FAD/NAD-bd_sf"/>
</dbReference>
<dbReference type="InterPro" id="IPR023753">
    <property type="entry name" value="FAD/NAD-binding_dom"/>
</dbReference>
<dbReference type="InterPro" id="IPR016156">
    <property type="entry name" value="FAD/NAD-linked_Rdtase_dimer_sf"/>
</dbReference>
<dbReference type="InterPro" id="IPR001100">
    <property type="entry name" value="Pyr_nuc-diS_OxRdtase"/>
</dbReference>
<dbReference type="InterPro" id="IPR004099">
    <property type="entry name" value="Pyr_nucl-diS_OxRdtase_dimer"/>
</dbReference>
<dbReference type="InterPro" id="IPR022962">
    <property type="entry name" value="STH_gammaproteobact"/>
</dbReference>
<dbReference type="NCBIfam" id="NF003585">
    <property type="entry name" value="PRK05249.1"/>
    <property type="match status" value="1"/>
</dbReference>
<dbReference type="PANTHER" id="PTHR22912">
    <property type="entry name" value="DISULFIDE OXIDOREDUCTASE"/>
    <property type="match status" value="1"/>
</dbReference>
<dbReference type="PANTHER" id="PTHR22912:SF93">
    <property type="entry name" value="SOLUBLE PYRIDINE NUCLEOTIDE TRANSHYDROGENASE"/>
    <property type="match status" value="1"/>
</dbReference>
<dbReference type="Pfam" id="PF07992">
    <property type="entry name" value="Pyr_redox_2"/>
    <property type="match status" value="1"/>
</dbReference>
<dbReference type="Pfam" id="PF02852">
    <property type="entry name" value="Pyr_redox_dim"/>
    <property type="match status" value="1"/>
</dbReference>
<dbReference type="PIRSF" id="PIRSF000350">
    <property type="entry name" value="Mercury_reductase_MerA"/>
    <property type="match status" value="1"/>
</dbReference>
<dbReference type="PRINTS" id="PR00368">
    <property type="entry name" value="FADPNR"/>
</dbReference>
<dbReference type="PRINTS" id="PR00411">
    <property type="entry name" value="PNDRDTASEI"/>
</dbReference>
<dbReference type="SUPFAM" id="SSF51905">
    <property type="entry name" value="FAD/NAD(P)-binding domain"/>
    <property type="match status" value="1"/>
</dbReference>
<dbReference type="SUPFAM" id="SSF55424">
    <property type="entry name" value="FAD/NAD-linked reductases, dimerisation (C-terminal) domain"/>
    <property type="match status" value="1"/>
</dbReference>
<keyword id="KW-0963">Cytoplasm</keyword>
<keyword id="KW-0274">FAD</keyword>
<keyword id="KW-0285">Flavoprotein</keyword>
<keyword id="KW-0520">NAD</keyword>
<keyword id="KW-0521">NADP</keyword>
<keyword id="KW-0560">Oxidoreductase</keyword>
<evidence type="ECO:0000255" key="1">
    <source>
        <dbReference type="HAMAP-Rule" id="MF_00247"/>
    </source>
</evidence>
<sequence>MPHSWDYDAVVIGSGPGGEGAAMGLVKQGARVAVIERYHNVGGGCTHWGTIPSKALRHAVSRIIEFNQNPLYSDHSRLLRSSFADILNHADNVINQQTRMRQGFYERNHCEILQGNAHFIDEHTLALECHDGTVETLTAEKFVIACGSRPYHPNDVDFSHPRIYDSDSILSLHHEPRHVIIYGAGVIGCEYASIFRGMDVKVDLINTRDRLLAFLDQEMSDSLSYHFWNSGVVIRHNEEYEKIEGCDDGVIMHLKSGKKLKADCLLYANGRTGNTDSLALENIGLETDSRGQLKVNSMYQTALPHVYAVGDVIGYPSLASAAYDQGRIAAQALVKGEATAHLIEDIPTGIYTIPEISSVGKTEQQLTAMKVPYEVGRAQFKHLARAQIVGMNVGTLKILFHRETKEILGIHCFGERAAEIIHIGQAIMEQKGGGNTIEYFVNTTFNYPTMAEAYRVAALNGLNRLF</sequence>
<comment type="function">
    <text evidence="1">Conversion of NADPH, generated by peripheral catabolic pathways, to NADH, which can enter the respiratory chain for energy generation.</text>
</comment>
<comment type="catalytic activity">
    <reaction evidence="1">
        <text>NAD(+) + NADPH = NADH + NADP(+)</text>
        <dbReference type="Rhea" id="RHEA:11692"/>
        <dbReference type="ChEBI" id="CHEBI:57540"/>
        <dbReference type="ChEBI" id="CHEBI:57783"/>
        <dbReference type="ChEBI" id="CHEBI:57945"/>
        <dbReference type="ChEBI" id="CHEBI:58349"/>
        <dbReference type="EC" id="1.6.1.1"/>
    </reaction>
</comment>
<comment type="cofactor">
    <cofactor evidence="1">
        <name>FAD</name>
        <dbReference type="ChEBI" id="CHEBI:57692"/>
    </cofactor>
    <text evidence="1">Binds 1 FAD per subunit.</text>
</comment>
<comment type="subcellular location">
    <subcellularLocation>
        <location evidence="1">Cytoplasm</location>
    </subcellularLocation>
</comment>
<comment type="similarity">
    <text evidence="1">Belongs to the class-I pyridine nucleotide-disulfide oxidoreductase family.</text>
</comment>
<accession>Q5PK71</accession>
<gene>
    <name evidence="1" type="primary">sthA</name>
    <name evidence="1" type="synonym">udhA</name>
    <name type="ordered locus">SPA3964</name>
</gene>